<proteinExistence type="evidence at protein level"/>
<gene>
    <name type="primary">Nptx1</name>
</gene>
<keyword id="KW-0106">Calcium</keyword>
<keyword id="KW-0968">Cytoplasmic vesicle</keyword>
<keyword id="KW-1015">Disulfide bond</keyword>
<keyword id="KW-0256">Endoplasmic reticulum</keyword>
<keyword id="KW-0325">Glycoprotein</keyword>
<keyword id="KW-0479">Metal-binding</keyword>
<keyword id="KW-1185">Reference proteome</keyword>
<keyword id="KW-0964">Secreted</keyword>
<keyword id="KW-0732">Signal</keyword>
<protein>
    <recommendedName>
        <fullName>Neuronal pentraxin-1</fullName>
        <shortName>NP1</shortName>
    </recommendedName>
    <alternativeName>
        <fullName>Neuronal pentraxin I</fullName>
        <shortName>NP-I</shortName>
    </alternativeName>
</protein>
<evidence type="ECO:0000250" key="1"/>
<evidence type="ECO:0000250" key="2">
    <source>
        <dbReference type="UniProtKB" id="P47971"/>
    </source>
</evidence>
<evidence type="ECO:0000250" key="3">
    <source>
        <dbReference type="UniProtKB" id="Q15818"/>
    </source>
</evidence>
<evidence type="ECO:0000255" key="4"/>
<evidence type="ECO:0000255" key="5">
    <source>
        <dbReference type="PROSITE-ProRule" id="PRU01172"/>
    </source>
</evidence>
<evidence type="ECO:0000256" key="6">
    <source>
        <dbReference type="SAM" id="MobiDB-lite"/>
    </source>
</evidence>
<evidence type="ECO:0000269" key="7">
    <source>
    </source>
</evidence>
<evidence type="ECO:0000305" key="8"/>
<comment type="function">
    <text evidence="2">May be involved in mediating uptake of synaptic material during synapse remodeling or in mediating the synaptic clustering of AMPA glutamate receptors at a subset of excitatory synapses.</text>
</comment>
<comment type="cofactor">
    <cofactor evidence="1">
        <name>Ca(2+)</name>
        <dbReference type="ChEBI" id="CHEBI:29108"/>
    </cofactor>
    <text evidence="1">Binds 2 calcium ions per subunit.</text>
</comment>
<comment type="subunit">
    <text evidence="2">Homooligomer or heterooligomer (probably pentamer) with neuronal pentraxin receptor (NPTXR).</text>
</comment>
<comment type="subcellular location">
    <subcellularLocation>
        <location evidence="3">Secreted</location>
    </subcellularLocation>
    <subcellularLocation>
        <location evidence="8">Cytoplasmic vesicle</location>
        <location evidence="8">Secretory vesicle</location>
    </subcellularLocation>
    <subcellularLocation>
        <location evidence="8">Endoplasmic reticulum</location>
    </subcellularLocation>
</comment>
<comment type="tissue specificity">
    <text evidence="7">Expressed in brain and kidney.</text>
</comment>
<reference key="1">
    <citation type="journal article" date="1996" name="Genomics">
        <title>Mouse and human neuronal pentraxin 1 (NPTX1): conservation, genomic structure, and chromosomal localization.</title>
        <authorList>
            <person name="Omeis I.A."/>
            <person name="Hsu Y.-C."/>
            <person name="Perin M.S."/>
        </authorList>
    </citation>
    <scope>NUCLEOTIDE SEQUENCE [MRNA]</scope>
</reference>
<reference key="2">
    <citation type="journal article" date="2010" name="Cell">
        <title>A tissue-specific atlas of mouse protein phosphorylation and expression.</title>
        <authorList>
            <person name="Huttlin E.L."/>
            <person name="Jedrychowski M.P."/>
            <person name="Elias J.E."/>
            <person name="Goswami T."/>
            <person name="Rad R."/>
            <person name="Beausoleil S.A."/>
            <person name="Villen J."/>
            <person name="Haas W."/>
            <person name="Sowa M.E."/>
            <person name="Gygi S.P."/>
        </authorList>
    </citation>
    <scope>IDENTIFICATION BY MASS SPECTROMETRY [LARGE SCALE ANALYSIS]</scope>
    <source>
        <tissue>Brain</tissue>
    </source>
</reference>
<reference key="3">
    <citation type="journal article" date="2022" name="Brain">
        <title>NPTX1 mutations trigger endoplasmic reticulum stress and cause autosomal dominant cerebellar ataxia.</title>
        <authorList>
            <person name="Coutelier M."/>
            <person name="Jacoupy M."/>
            <person name="Janer A."/>
            <person name="Renaud F."/>
            <person name="Auger N."/>
            <person name="Saripella G.V."/>
            <person name="Ancien F."/>
            <person name="Pucci F."/>
            <person name="Rooman M."/>
            <person name="Gilis D."/>
            <person name="Lariviere R."/>
            <person name="Sgarioto N."/>
            <person name="Valter R."/>
            <person name="Guillot-Noel L."/>
            <person name="Le Ber I."/>
            <person name="Sayah S."/>
            <person name="Charles P."/>
            <person name="Nuemann A."/>
            <person name="Pauly M.G."/>
            <person name="Helmchen C."/>
            <person name="Deininger N."/>
            <person name="Haack T.B."/>
            <person name="Brais B."/>
            <person name="Brice A."/>
            <person name="Tregouet D.A."/>
            <person name="El Hachimi K.H."/>
            <person name="Shoubridge E.A."/>
            <person name="Durr A."/>
            <person name="Stevanin G."/>
        </authorList>
    </citation>
    <scope>TISSUE SPECIFICITY</scope>
</reference>
<accession>Q62443</accession>
<sequence length="432" mass="47117">MLAGRAARTCALLALCLLGSGAQDFGPTRFICTSVPVDADMCAASVAAGGAEELRSNVLQLRETVLQQKETILSQKETIRELTTKLGRCESQSTLDSGPGEARSGGGRKQPGSGKNTMGDLSRTPAAETLSQLGQTLQSLKTRLENLEQYSRLNSSSQTNSLKDLLQSKIDDLERQVLSRVNTLEEGKGGPKNDTEERAKIESALTSLHQRISELEKGQKDNRPGDKFQLTFPLRTNYMYAKVKKSLPEMYAFTVCMWLKSSAAPGVGTPFSYAVPGQANELVLIEWGNNPMEILINDKVAKLPFVINDGKWHHICVTWTTRDGVWEAYQDGTQGGNGENLAPYHPIKPQGVLVLGQEQDTLGGGFDATQAFVGELAHFNIWDRKLTPGEVYNLATCSSKALSGNVIAWAESQIEIFGGATKWTFEACRQIN</sequence>
<dbReference type="EMBL" id="U62021">
    <property type="protein sequence ID" value="AAC52826.1"/>
    <property type="molecule type" value="Genomic_DNA"/>
</dbReference>
<dbReference type="CCDS" id="CCDS25719.1"/>
<dbReference type="RefSeq" id="NP_032756.1">
    <property type="nucleotide sequence ID" value="NM_008730.2"/>
</dbReference>
<dbReference type="SMR" id="Q62443"/>
<dbReference type="BioGRID" id="201833">
    <property type="interactions" value="4"/>
</dbReference>
<dbReference type="FunCoup" id="Q62443">
    <property type="interactions" value="916"/>
</dbReference>
<dbReference type="IntAct" id="Q62443">
    <property type="interactions" value="2"/>
</dbReference>
<dbReference type="MINT" id="Q62443"/>
<dbReference type="STRING" id="10090.ENSMUSP00000026670"/>
<dbReference type="GlyConnect" id="2552">
    <property type="glycosylation" value="11 N-Linked glycans (2 sites)"/>
</dbReference>
<dbReference type="GlyCosmos" id="Q62443">
    <property type="glycosylation" value="2 sites, 11 glycans"/>
</dbReference>
<dbReference type="GlyGen" id="Q62443">
    <property type="glycosylation" value="3 sites, 13 N-linked glycans (2 sites), 1 O-linked glycan (1 site)"/>
</dbReference>
<dbReference type="iPTMnet" id="Q62443"/>
<dbReference type="PhosphoSitePlus" id="Q62443"/>
<dbReference type="SwissPalm" id="Q62443"/>
<dbReference type="jPOST" id="Q62443"/>
<dbReference type="PaxDb" id="10090-ENSMUSP00000026670"/>
<dbReference type="ProteomicsDB" id="293882"/>
<dbReference type="Antibodypedia" id="32766">
    <property type="antibodies" value="407 antibodies from 31 providers"/>
</dbReference>
<dbReference type="DNASU" id="18164"/>
<dbReference type="Ensembl" id="ENSMUST00000026670.5">
    <property type="protein sequence ID" value="ENSMUSP00000026670.5"/>
    <property type="gene ID" value="ENSMUSG00000025582.5"/>
</dbReference>
<dbReference type="GeneID" id="18164"/>
<dbReference type="KEGG" id="mmu:18164"/>
<dbReference type="UCSC" id="uc007mqv.1">
    <property type="organism name" value="mouse"/>
</dbReference>
<dbReference type="AGR" id="MGI:107811"/>
<dbReference type="CTD" id="4884"/>
<dbReference type="MGI" id="MGI:107811">
    <property type="gene designation" value="Nptx1"/>
</dbReference>
<dbReference type="VEuPathDB" id="HostDB:ENSMUSG00000025582"/>
<dbReference type="eggNOG" id="ENOG502QTID">
    <property type="taxonomic scope" value="Eukaryota"/>
</dbReference>
<dbReference type="GeneTree" id="ENSGT01060000248591"/>
<dbReference type="HOGENOM" id="CLU_032051_0_0_1"/>
<dbReference type="InParanoid" id="Q62443"/>
<dbReference type="OMA" id="GDMCAAT"/>
<dbReference type="OrthoDB" id="8871962at2759"/>
<dbReference type="PhylomeDB" id="Q62443"/>
<dbReference type="TreeFam" id="TF330208"/>
<dbReference type="BioGRID-ORCS" id="18164">
    <property type="hits" value="0 hits in 77 CRISPR screens"/>
</dbReference>
<dbReference type="PRO" id="PR:Q62443"/>
<dbReference type="Proteomes" id="UP000000589">
    <property type="component" value="Chromosome 11"/>
</dbReference>
<dbReference type="RNAct" id="Q62443">
    <property type="molecule type" value="protein"/>
</dbReference>
<dbReference type="Bgee" id="ENSMUSG00000025582">
    <property type="expression patterns" value="Expressed in cerebellum lobe and 143 other cell types or tissues"/>
</dbReference>
<dbReference type="ExpressionAtlas" id="Q62443">
    <property type="expression patterns" value="baseline and differential"/>
</dbReference>
<dbReference type="GO" id="GO:0005783">
    <property type="term" value="C:endoplasmic reticulum"/>
    <property type="evidence" value="ECO:0007669"/>
    <property type="project" value="UniProtKB-SubCell"/>
</dbReference>
<dbReference type="GO" id="GO:0098978">
    <property type="term" value="C:glutamatergic synapse"/>
    <property type="evidence" value="ECO:0007669"/>
    <property type="project" value="Ensembl"/>
</dbReference>
<dbReference type="GO" id="GO:0043083">
    <property type="term" value="C:synaptic cleft"/>
    <property type="evidence" value="ECO:0007669"/>
    <property type="project" value="Ensembl"/>
</dbReference>
<dbReference type="GO" id="GO:0030133">
    <property type="term" value="C:transport vesicle"/>
    <property type="evidence" value="ECO:0007669"/>
    <property type="project" value="UniProtKB-SubCell"/>
</dbReference>
<dbReference type="GO" id="GO:0046872">
    <property type="term" value="F:metal ion binding"/>
    <property type="evidence" value="ECO:0007669"/>
    <property type="project" value="UniProtKB-KW"/>
</dbReference>
<dbReference type="GO" id="GO:0060385">
    <property type="term" value="P:axonogenesis involved in innervation"/>
    <property type="evidence" value="ECO:0000316"/>
    <property type="project" value="MGI"/>
</dbReference>
<dbReference type="GO" id="GO:0071333">
    <property type="term" value="P:cellular response to glucose stimulus"/>
    <property type="evidence" value="ECO:0007669"/>
    <property type="project" value="Ensembl"/>
</dbReference>
<dbReference type="GO" id="GO:0035865">
    <property type="term" value="P:cellular response to potassium ion"/>
    <property type="evidence" value="ECO:0007669"/>
    <property type="project" value="Ensembl"/>
</dbReference>
<dbReference type="GO" id="GO:0043653">
    <property type="term" value="P:mitochondrial fragmentation involved in apoptotic process"/>
    <property type="evidence" value="ECO:0007669"/>
    <property type="project" value="Ensembl"/>
</dbReference>
<dbReference type="GO" id="GO:0006839">
    <property type="term" value="P:mitochondrial transport"/>
    <property type="evidence" value="ECO:0007669"/>
    <property type="project" value="Ensembl"/>
</dbReference>
<dbReference type="GO" id="GO:0099645">
    <property type="term" value="P:neurotransmitter receptor localization to postsynaptic specialization membrane"/>
    <property type="evidence" value="ECO:0007669"/>
    <property type="project" value="Ensembl"/>
</dbReference>
<dbReference type="GO" id="GO:0097107">
    <property type="term" value="P:postsynaptic density assembly"/>
    <property type="evidence" value="ECO:0007669"/>
    <property type="project" value="Ensembl"/>
</dbReference>
<dbReference type="CDD" id="cd00152">
    <property type="entry name" value="PTX"/>
    <property type="match status" value="1"/>
</dbReference>
<dbReference type="FunFam" id="2.60.120.200:FF:000012">
    <property type="entry name" value="neuronal pentraxin receptor"/>
    <property type="match status" value="1"/>
</dbReference>
<dbReference type="Gene3D" id="2.60.120.200">
    <property type="match status" value="1"/>
</dbReference>
<dbReference type="InterPro" id="IPR013320">
    <property type="entry name" value="ConA-like_dom_sf"/>
</dbReference>
<dbReference type="InterPro" id="IPR051360">
    <property type="entry name" value="Neuronal_Pentraxin_Related"/>
</dbReference>
<dbReference type="InterPro" id="IPR030476">
    <property type="entry name" value="Pentaxin_CS"/>
</dbReference>
<dbReference type="InterPro" id="IPR001759">
    <property type="entry name" value="Pentraxin-related"/>
</dbReference>
<dbReference type="PANTHER" id="PTHR19277:SF24">
    <property type="entry name" value="NEURONAL PENTRAXIN-1"/>
    <property type="match status" value="1"/>
</dbReference>
<dbReference type="PANTHER" id="PTHR19277">
    <property type="entry name" value="PENTRAXIN"/>
    <property type="match status" value="1"/>
</dbReference>
<dbReference type="Pfam" id="PF00354">
    <property type="entry name" value="Pentaxin"/>
    <property type="match status" value="1"/>
</dbReference>
<dbReference type="PRINTS" id="PR00895">
    <property type="entry name" value="PENTAXIN"/>
</dbReference>
<dbReference type="SMART" id="SM00159">
    <property type="entry name" value="PTX"/>
    <property type="match status" value="1"/>
</dbReference>
<dbReference type="SUPFAM" id="SSF49899">
    <property type="entry name" value="Concanavalin A-like lectins/glucanases"/>
    <property type="match status" value="1"/>
</dbReference>
<dbReference type="PROSITE" id="PS00289">
    <property type="entry name" value="PTX_1"/>
    <property type="match status" value="1"/>
</dbReference>
<dbReference type="PROSITE" id="PS51828">
    <property type="entry name" value="PTX_2"/>
    <property type="match status" value="1"/>
</dbReference>
<name>NPTX1_MOUSE</name>
<organism>
    <name type="scientific">Mus musculus</name>
    <name type="common">Mouse</name>
    <dbReference type="NCBI Taxonomy" id="10090"/>
    <lineage>
        <taxon>Eukaryota</taxon>
        <taxon>Metazoa</taxon>
        <taxon>Chordata</taxon>
        <taxon>Craniata</taxon>
        <taxon>Vertebrata</taxon>
        <taxon>Euteleostomi</taxon>
        <taxon>Mammalia</taxon>
        <taxon>Eutheria</taxon>
        <taxon>Euarchontoglires</taxon>
        <taxon>Glires</taxon>
        <taxon>Rodentia</taxon>
        <taxon>Myomorpha</taxon>
        <taxon>Muroidea</taxon>
        <taxon>Muridae</taxon>
        <taxon>Murinae</taxon>
        <taxon>Mus</taxon>
        <taxon>Mus</taxon>
    </lineage>
</organism>
<feature type="signal peptide" evidence="4">
    <location>
        <begin position="1"/>
        <end position="22"/>
    </location>
</feature>
<feature type="chain" id="PRO_0000023548" description="Neuronal pentraxin-1">
    <location>
        <begin position="23"/>
        <end position="432"/>
    </location>
</feature>
<feature type="domain" description="Pentraxin (PTX)" evidence="5">
    <location>
        <begin position="226"/>
        <end position="428"/>
    </location>
</feature>
<feature type="region of interest" description="Disordered" evidence="6">
    <location>
        <begin position="88"/>
        <end position="122"/>
    </location>
</feature>
<feature type="binding site" evidence="1">
    <location>
        <position position="280"/>
    </location>
    <ligand>
        <name>Ca(2+)</name>
        <dbReference type="ChEBI" id="CHEBI:29108"/>
        <label>1</label>
    </ligand>
</feature>
<feature type="binding site" evidence="1">
    <location>
        <position position="358"/>
    </location>
    <ligand>
        <name>Ca(2+)</name>
        <dbReference type="ChEBI" id="CHEBI:29108"/>
        <label>1</label>
    </ligand>
</feature>
<feature type="binding site" evidence="5">
    <location>
        <position position="358"/>
    </location>
    <ligand>
        <name>Ca(2+)</name>
        <dbReference type="ChEBI" id="CHEBI:29108"/>
        <label>2</label>
    </ligand>
</feature>
<feature type="binding site" evidence="1">
    <location>
        <position position="359"/>
    </location>
    <ligand>
        <name>Ca(2+)</name>
        <dbReference type="ChEBI" id="CHEBI:29108"/>
        <label>1</label>
    </ligand>
</feature>
<feature type="binding site" evidence="1">
    <location>
        <position position="360"/>
    </location>
    <ligand>
        <name>Ca(2+)</name>
        <dbReference type="ChEBI" id="CHEBI:29108"/>
        <label>1</label>
    </ligand>
</feature>
<feature type="binding site" evidence="5">
    <location>
        <position position="360"/>
    </location>
    <ligand>
        <name>Ca(2+)</name>
        <dbReference type="ChEBI" id="CHEBI:29108"/>
        <label>2</label>
    </ligand>
</feature>
<feature type="binding site" evidence="5">
    <location>
        <position position="370"/>
    </location>
    <ligand>
        <name>Ca(2+)</name>
        <dbReference type="ChEBI" id="CHEBI:29108"/>
        <label>2</label>
    </ligand>
</feature>
<feature type="glycosylation site" description="N-linked (GlcNAc...) asparagine" evidence="4">
    <location>
        <position position="154"/>
    </location>
</feature>
<feature type="glycosylation site" description="N-linked (GlcNAc...) asparagine" evidence="4">
    <location>
        <position position="193"/>
    </location>
</feature>
<feature type="disulfide bond" evidence="5">
    <location>
        <begin position="256"/>
        <end position="316"/>
    </location>
</feature>